<gene>
    <name evidence="1" type="primary">ispH</name>
    <name type="synonym">lytB</name>
    <name type="ordered locus">BP1026B_II2333</name>
</gene>
<reference key="1">
    <citation type="journal article" date="1999" name="Antimicrob. Agents Chemother.">
        <title>Isolation of polymyxin B-susceptible mutants of Burkholderia pseudomallei and molecular characterization of genetic loci involved in polymyxin B resistance.</title>
        <authorList>
            <person name="Burtnick M.N."/>
            <person name="Woods D.E."/>
        </authorList>
    </citation>
    <scope>NUCLEOTIDE SEQUENCE [GENOMIC DNA]</scope>
    <source>
        <strain>1026b</strain>
    </source>
</reference>
<reference key="2">
    <citation type="journal article" date="2012" name="PLoS ONE">
        <title>Evolution of Burkholderia pseudomallei in recurrent melioidosis.</title>
        <authorList>
            <person name="Hayden H.S."/>
            <person name="Lim R."/>
            <person name="Brittnacher M.J."/>
            <person name="Sims E.H."/>
            <person name="Ramage E.R."/>
            <person name="Fong C."/>
            <person name="Wu Z."/>
            <person name="Crist E."/>
            <person name="Chang J."/>
            <person name="Zhou Y."/>
            <person name="Radey M."/>
            <person name="Rohmer L."/>
            <person name="Haugen E."/>
            <person name="Gillett W."/>
            <person name="Wuthiekanun V."/>
            <person name="Peacock S.J."/>
            <person name="Kaul R."/>
            <person name="Miller S.I."/>
            <person name="Manoil C."/>
            <person name="Jacobs M.A."/>
        </authorList>
    </citation>
    <scope>NUCLEOTIDE SEQUENCE [LARGE SCALE GENOMIC DNA]</scope>
    <source>
        <strain>1026b</strain>
    </source>
</reference>
<protein>
    <recommendedName>
        <fullName evidence="1">4-hydroxy-3-methylbut-2-enyl diphosphate reductase</fullName>
        <shortName evidence="1">HMBPP reductase</shortName>
        <ecNumber evidence="1">1.17.7.4</ecNumber>
    </recommendedName>
</protein>
<sequence>MRVILAQPRGFCAGVVRAIEIVERALQQNGAPVYVRHEIVHNRHVVENLRNKGARFVEELDEVPHGAVAIFSAHGVAQTVEQDAQARGLDVLDATCPLVTKVHVQGRQYVAAGRRLILIGHAGHPEVEGTIGQIPAEVILVQSEAEVDTLTLPADTPVAYVTQTTLSVDDTRGIIEALQRRFTDIVGPDTRDICYATQNRQAAVRELSEQVDVLLVVGATNSSNSNRLREIGTESGVPSYLVADGSEVRAEWFANARTVGLTAGASAPEEMVEDVIAALRALGPLEVATMSGREEKVEFKLPAKLTQAVAREV</sequence>
<proteinExistence type="inferred from homology"/>
<accession>I1WW99</accession>
<accession>Q63IA3</accession>
<accession>Q9ZFL0</accession>
<feature type="chain" id="PRO_0000429791" description="4-hydroxy-3-methylbut-2-enyl diphosphate reductase">
    <location>
        <begin position="1"/>
        <end position="313"/>
    </location>
</feature>
<feature type="active site" description="Proton donor" evidence="1">
    <location>
        <position position="126"/>
    </location>
</feature>
<feature type="binding site" evidence="1">
    <location>
        <position position="12"/>
    </location>
    <ligand>
        <name>[4Fe-4S] cluster</name>
        <dbReference type="ChEBI" id="CHEBI:49883"/>
    </ligand>
</feature>
<feature type="binding site" evidence="1">
    <location>
        <position position="41"/>
    </location>
    <ligand>
        <name>(2E)-4-hydroxy-3-methylbut-2-enyl diphosphate</name>
        <dbReference type="ChEBI" id="CHEBI:128753"/>
    </ligand>
</feature>
<feature type="binding site" evidence="1">
    <location>
        <position position="41"/>
    </location>
    <ligand>
        <name>dimethylallyl diphosphate</name>
        <dbReference type="ChEBI" id="CHEBI:57623"/>
    </ligand>
</feature>
<feature type="binding site" evidence="1">
    <location>
        <position position="41"/>
    </location>
    <ligand>
        <name>isopentenyl diphosphate</name>
        <dbReference type="ChEBI" id="CHEBI:128769"/>
    </ligand>
</feature>
<feature type="binding site" evidence="1">
    <location>
        <position position="74"/>
    </location>
    <ligand>
        <name>(2E)-4-hydroxy-3-methylbut-2-enyl diphosphate</name>
        <dbReference type="ChEBI" id="CHEBI:128753"/>
    </ligand>
</feature>
<feature type="binding site" evidence="1">
    <location>
        <position position="74"/>
    </location>
    <ligand>
        <name>dimethylallyl diphosphate</name>
        <dbReference type="ChEBI" id="CHEBI:57623"/>
    </ligand>
</feature>
<feature type="binding site" evidence="1">
    <location>
        <position position="74"/>
    </location>
    <ligand>
        <name>isopentenyl diphosphate</name>
        <dbReference type="ChEBI" id="CHEBI:128769"/>
    </ligand>
</feature>
<feature type="binding site" evidence="1">
    <location>
        <position position="96"/>
    </location>
    <ligand>
        <name>[4Fe-4S] cluster</name>
        <dbReference type="ChEBI" id="CHEBI:49883"/>
    </ligand>
</feature>
<feature type="binding site" evidence="1">
    <location>
        <position position="124"/>
    </location>
    <ligand>
        <name>(2E)-4-hydroxy-3-methylbut-2-enyl diphosphate</name>
        <dbReference type="ChEBI" id="CHEBI:128753"/>
    </ligand>
</feature>
<feature type="binding site" evidence="1">
    <location>
        <position position="124"/>
    </location>
    <ligand>
        <name>dimethylallyl diphosphate</name>
        <dbReference type="ChEBI" id="CHEBI:57623"/>
    </ligand>
</feature>
<feature type="binding site" evidence="1">
    <location>
        <position position="124"/>
    </location>
    <ligand>
        <name>isopentenyl diphosphate</name>
        <dbReference type="ChEBI" id="CHEBI:128769"/>
    </ligand>
</feature>
<feature type="binding site" evidence="1">
    <location>
        <position position="164"/>
    </location>
    <ligand>
        <name>(2E)-4-hydroxy-3-methylbut-2-enyl diphosphate</name>
        <dbReference type="ChEBI" id="CHEBI:128753"/>
    </ligand>
</feature>
<feature type="binding site" evidence="1">
    <location>
        <position position="194"/>
    </location>
    <ligand>
        <name>[4Fe-4S] cluster</name>
        <dbReference type="ChEBI" id="CHEBI:49883"/>
    </ligand>
</feature>
<feature type="binding site" evidence="1">
    <location>
        <position position="222"/>
    </location>
    <ligand>
        <name>(2E)-4-hydroxy-3-methylbut-2-enyl diphosphate</name>
        <dbReference type="ChEBI" id="CHEBI:128753"/>
    </ligand>
</feature>
<feature type="binding site" evidence="1">
    <location>
        <position position="222"/>
    </location>
    <ligand>
        <name>dimethylallyl diphosphate</name>
        <dbReference type="ChEBI" id="CHEBI:57623"/>
    </ligand>
</feature>
<feature type="binding site" evidence="1">
    <location>
        <position position="222"/>
    </location>
    <ligand>
        <name>isopentenyl diphosphate</name>
        <dbReference type="ChEBI" id="CHEBI:128769"/>
    </ligand>
</feature>
<feature type="binding site" evidence="1">
    <location>
        <position position="223"/>
    </location>
    <ligand>
        <name>(2E)-4-hydroxy-3-methylbut-2-enyl diphosphate</name>
        <dbReference type="ChEBI" id="CHEBI:128753"/>
    </ligand>
</feature>
<feature type="binding site" evidence="1">
    <location>
        <position position="223"/>
    </location>
    <ligand>
        <name>dimethylallyl diphosphate</name>
        <dbReference type="ChEBI" id="CHEBI:57623"/>
    </ligand>
</feature>
<feature type="binding site" evidence="1">
    <location>
        <position position="223"/>
    </location>
    <ligand>
        <name>isopentenyl diphosphate</name>
        <dbReference type="ChEBI" id="CHEBI:128769"/>
    </ligand>
</feature>
<feature type="binding site" evidence="1">
    <location>
        <position position="224"/>
    </location>
    <ligand>
        <name>(2E)-4-hydroxy-3-methylbut-2-enyl diphosphate</name>
        <dbReference type="ChEBI" id="CHEBI:128753"/>
    </ligand>
</feature>
<feature type="binding site" evidence="1">
    <location>
        <position position="224"/>
    </location>
    <ligand>
        <name>dimethylallyl diphosphate</name>
        <dbReference type="ChEBI" id="CHEBI:57623"/>
    </ligand>
</feature>
<feature type="binding site" evidence="1">
    <location>
        <position position="224"/>
    </location>
    <ligand>
        <name>isopentenyl diphosphate</name>
        <dbReference type="ChEBI" id="CHEBI:128769"/>
    </ligand>
</feature>
<feature type="binding site" evidence="1">
    <location>
        <position position="266"/>
    </location>
    <ligand>
        <name>(2E)-4-hydroxy-3-methylbut-2-enyl diphosphate</name>
        <dbReference type="ChEBI" id="CHEBI:128753"/>
    </ligand>
</feature>
<feature type="binding site" evidence="1">
    <location>
        <position position="266"/>
    </location>
    <ligand>
        <name>dimethylallyl diphosphate</name>
        <dbReference type="ChEBI" id="CHEBI:57623"/>
    </ligand>
</feature>
<feature type="binding site" evidence="1">
    <location>
        <position position="266"/>
    </location>
    <ligand>
        <name>isopentenyl diphosphate</name>
        <dbReference type="ChEBI" id="CHEBI:128769"/>
    </ligand>
</feature>
<feature type="sequence conflict" description="In Ref. 1; AAC78334." evidence="2" ref="1">
    <original>V</original>
    <variation>F</variation>
    <location>
        <position position="297"/>
    </location>
</feature>
<comment type="function">
    <text evidence="1">Catalyzes the conversion of 1-hydroxy-2-methyl-2-(E)-butenyl 4-diphosphate (HMBPP) into a mixture of isopentenyl diphosphate (IPP) and dimethylallyl diphosphate (DMAPP). Acts in the terminal step of the DOXP/MEP pathway for isoprenoid precursor biosynthesis.</text>
</comment>
<comment type="catalytic activity">
    <reaction evidence="1">
        <text>isopentenyl diphosphate + 2 oxidized [2Fe-2S]-[ferredoxin] + H2O = (2E)-4-hydroxy-3-methylbut-2-enyl diphosphate + 2 reduced [2Fe-2S]-[ferredoxin] + 2 H(+)</text>
        <dbReference type="Rhea" id="RHEA:24488"/>
        <dbReference type="Rhea" id="RHEA-COMP:10000"/>
        <dbReference type="Rhea" id="RHEA-COMP:10001"/>
        <dbReference type="ChEBI" id="CHEBI:15377"/>
        <dbReference type="ChEBI" id="CHEBI:15378"/>
        <dbReference type="ChEBI" id="CHEBI:33737"/>
        <dbReference type="ChEBI" id="CHEBI:33738"/>
        <dbReference type="ChEBI" id="CHEBI:128753"/>
        <dbReference type="ChEBI" id="CHEBI:128769"/>
        <dbReference type="EC" id="1.17.7.4"/>
    </reaction>
</comment>
<comment type="catalytic activity">
    <reaction evidence="1">
        <text>dimethylallyl diphosphate + 2 oxidized [2Fe-2S]-[ferredoxin] + H2O = (2E)-4-hydroxy-3-methylbut-2-enyl diphosphate + 2 reduced [2Fe-2S]-[ferredoxin] + 2 H(+)</text>
        <dbReference type="Rhea" id="RHEA:24825"/>
        <dbReference type="Rhea" id="RHEA-COMP:10000"/>
        <dbReference type="Rhea" id="RHEA-COMP:10001"/>
        <dbReference type="ChEBI" id="CHEBI:15377"/>
        <dbReference type="ChEBI" id="CHEBI:15378"/>
        <dbReference type="ChEBI" id="CHEBI:33737"/>
        <dbReference type="ChEBI" id="CHEBI:33738"/>
        <dbReference type="ChEBI" id="CHEBI:57623"/>
        <dbReference type="ChEBI" id="CHEBI:128753"/>
        <dbReference type="EC" id="1.17.7.4"/>
    </reaction>
</comment>
<comment type="cofactor">
    <cofactor evidence="1">
        <name>[4Fe-4S] cluster</name>
        <dbReference type="ChEBI" id="CHEBI:49883"/>
    </cofactor>
    <text evidence="1">Binds 1 [4Fe-4S] cluster per subunit.</text>
</comment>
<comment type="pathway">
    <text evidence="1">Isoprenoid biosynthesis; dimethylallyl diphosphate biosynthesis; dimethylallyl diphosphate from (2E)-4-hydroxy-3-methylbutenyl diphosphate: step 1/1.</text>
</comment>
<comment type="pathway">
    <text evidence="1">Isoprenoid biosynthesis; isopentenyl diphosphate biosynthesis via DXP pathway; isopentenyl diphosphate from 1-deoxy-D-xylulose 5-phosphate: step 6/6.</text>
</comment>
<comment type="similarity">
    <text evidence="1">Belongs to the IspH family.</text>
</comment>
<evidence type="ECO:0000255" key="1">
    <source>
        <dbReference type="HAMAP-Rule" id="MF_00191"/>
    </source>
</evidence>
<evidence type="ECO:0000305" key="2"/>
<dbReference type="EC" id="1.17.7.4" evidence="1"/>
<dbReference type="EMBL" id="AF098521">
    <property type="protein sequence ID" value="AAC78334.1"/>
    <property type="molecule type" value="Genomic_DNA"/>
</dbReference>
<dbReference type="EMBL" id="CP002834">
    <property type="protein sequence ID" value="AFI70543.1"/>
    <property type="molecule type" value="Genomic_DNA"/>
</dbReference>
<dbReference type="RefSeq" id="WP_004187484.1">
    <property type="nucleotide sequence ID" value="NZ_CP004380.1"/>
</dbReference>
<dbReference type="SMR" id="I1WW99"/>
<dbReference type="GeneID" id="93064408"/>
<dbReference type="KEGG" id="bpz:BP1026B_II2333"/>
<dbReference type="PATRIC" id="fig|884204.3.peg.6839"/>
<dbReference type="UniPathway" id="UPA00056">
    <property type="reaction ID" value="UER00097"/>
</dbReference>
<dbReference type="UniPathway" id="UPA00059">
    <property type="reaction ID" value="UER00105"/>
</dbReference>
<dbReference type="Proteomes" id="UP000010087">
    <property type="component" value="Chromosome 2"/>
</dbReference>
<dbReference type="GO" id="GO:0051539">
    <property type="term" value="F:4 iron, 4 sulfur cluster binding"/>
    <property type="evidence" value="ECO:0007669"/>
    <property type="project" value="UniProtKB-UniRule"/>
</dbReference>
<dbReference type="GO" id="GO:0051745">
    <property type="term" value="F:4-hydroxy-3-methylbut-2-enyl diphosphate reductase activity"/>
    <property type="evidence" value="ECO:0007669"/>
    <property type="project" value="UniProtKB-UniRule"/>
</dbReference>
<dbReference type="GO" id="GO:0046872">
    <property type="term" value="F:metal ion binding"/>
    <property type="evidence" value="ECO:0007669"/>
    <property type="project" value="UniProtKB-KW"/>
</dbReference>
<dbReference type="GO" id="GO:0050992">
    <property type="term" value="P:dimethylallyl diphosphate biosynthetic process"/>
    <property type="evidence" value="ECO:0007669"/>
    <property type="project" value="UniProtKB-UniRule"/>
</dbReference>
<dbReference type="GO" id="GO:0019288">
    <property type="term" value="P:isopentenyl diphosphate biosynthetic process, methylerythritol 4-phosphate pathway"/>
    <property type="evidence" value="ECO:0007669"/>
    <property type="project" value="UniProtKB-UniRule"/>
</dbReference>
<dbReference type="GO" id="GO:0016114">
    <property type="term" value="P:terpenoid biosynthetic process"/>
    <property type="evidence" value="ECO:0007669"/>
    <property type="project" value="UniProtKB-UniRule"/>
</dbReference>
<dbReference type="CDD" id="cd13944">
    <property type="entry name" value="lytB_ispH"/>
    <property type="match status" value="1"/>
</dbReference>
<dbReference type="Gene3D" id="3.40.50.11270">
    <property type="match status" value="1"/>
</dbReference>
<dbReference type="Gene3D" id="3.40.1010.20">
    <property type="entry name" value="4-hydroxy-3-methylbut-2-enyl diphosphate reductase, catalytic domain"/>
    <property type="match status" value="2"/>
</dbReference>
<dbReference type="HAMAP" id="MF_00191">
    <property type="entry name" value="IspH"/>
    <property type="match status" value="1"/>
</dbReference>
<dbReference type="InterPro" id="IPR003451">
    <property type="entry name" value="LytB/IspH"/>
</dbReference>
<dbReference type="NCBIfam" id="TIGR00216">
    <property type="entry name" value="ispH_lytB"/>
    <property type="match status" value="1"/>
</dbReference>
<dbReference type="NCBIfam" id="NF002188">
    <property type="entry name" value="PRK01045.1-2"/>
    <property type="match status" value="1"/>
</dbReference>
<dbReference type="NCBIfam" id="NF002190">
    <property type="entry name" value="PRK01045.1-4"/>
    <property type="match status" value="1"/>
</dbReference>
<dbReference type="PANTHER" id="PTHR30426">
    <property type="entry name" value="4-HYDROXY-3-METHYLBUT-2-ENYL DIPHOSPHATE REDUCTASE"/>
    <property type="match status" value="1"/>
</dbReference>
<dbReference type="PANTHER" id="PTHR30426:SF0">
    <property type="entry name" value="4-HYDROXY-3-METHYLBUT-2-ENYL DIPHOSPHATE REDUCTASE"/>
    <property type="match status" value="1"/>
</dbReference>
<dbReference type="Pfam" id="PF02401">
    <property type="entry name" value="LYTB"/>
    <property type="match status" value="1"/>
</dbReference>
<organism>
    <name type="scientific">Burkholderia pseudomallei (strain 1026b)</name>
    <dbReference type="NCBI Taxonomy" id="884204"/>
    <lineage>
        <taxon>Bacteria</taxon>
        <taxon>Pseudomonadati</taxon>
        <taxon>Pseudomonadota</taxon>
        <taxon>Betaproteobacteria</taxon>
        <taxon>Burkholderiales</taxon>
        <taxon>Burkholderiaceae</taxon>
        <taxon>Burkholderia</taxon>
        <taxon>pseudomallei group</taxon>
    </lineage>
</organism>
<name>ISPH_BURP2</name>
<keyword id="KW-0004">4Fe-4S</keyword>
<keyword id="KW-0408">Iron</keyword>
<keyword id="KW-0411">Iron-sulfur</keyword>
<keyword id="KW-0414">Isoprene biosynthesis</keyword>
<keyword id="KW-0479">Metal-binding</keyword>
<keyword id="KW-0560">Oxidoreductase</keyword>